<reference key="1">
    <citation type="journal article" date="2003" name="Proc. Natl. Acad. Sci. U.S.A.">
        <title>Complete genome sequence and analysis of Wolinella succinogenes.</title>
        <authorList>
            <person name="Baar C."/>
            <person name="Eppinger M."/>
            <person name="Raddatz G."/>
            <person name="Simon J."/>
            <person name="Lanz C."/>
            <person name="Klimmek O."/>
            <person name="Nandakumar R."/>
            <person name="Gross R."/>
            <person name="Rosinus A."/>
            <person name="Keller H."/>
            <person name="Jagtap P."/>
            <person name="Linke B."/>
            <person name="Meyer F."/>
            <person name="Lederer H."/>
            <person name="Schuster S.C."/>
        </authorList>
    </citation>
    <scope>NUCLEOTIDE SEQUENCE [LARGE SCALE GENOMIC DNA]</scope>
    <source>
        <strain>ATCC 29543 / DSM 1740 / CCUG 13145 / JCM 31913 / LMG 7466 / NCTC 11488 / FDC 602W</strain>
    </source>
</reference>
<protein>
    <recommendedName>
        <fullName evidence="1">L-seryl-tRNA(Sec) selenium transferase</fullName>
        <ecNumber evidence="1">2.9.1.1</ecNumber>
    </recommendedName>
    <alternativeName>
        <fullName evidence="1">Selenocysteine synthase</fullName>
        <shortName evidence="1">Sec synthase</shortName>
    </alternativeName>
    <alternativeName>
        <fullName evidence="1">Selenocysteinyl-tRNA(Sec) synthase</fullName>
    </alternativeName>
</protein>
<name>SELA_WOLSU</name>
<organism>
    <name type="scientific">Wolinella succinogenes (strain ATCC 29543 / DSM 1740 / CCUG 13145 / JCM 31913 / LMG 7466 / NCTC 11488 / FDC 602W)</name>
    <name type="common">Vibrio succinogenes</name>
    <dbReference type="NCBI Taxonomy" id="273121"/>
    <lineage>
        <taxon>Bacteria</taxon>
        <taxon>Pseudomonadati</taxon>
        <taxon>Campylobacterota</taxon>
        <taxon>Epsilonproteobacteria</taxon>
        <taxon>Campylobacterales</taxon>
        <taxon>Helicobacteraceae</taxon>
        <taxon>Wolinella</taxon>
    </lineage>
</organism>
<dbReference type="EC" id="2.9.1.1" evidence="1"/>
<dbReference type="EMBL" id="BX571659">
    <property type="protein sequence ID" value="CAE09951.1"/>
    <property type="molecule type" value="Genomic_DNA"/>
</dbReference>
<dbReference type="RefSeq" id="WP_011138748.1">
    <property type="nucleotide sequence ID" value="NC_005090.1"/>
</dbReference>
<dbReference type="SMR" id="Q7M9L1"/>
<dbReference type="STRING" id="273121.WS0840"/>
<dbReference type="KEGG" id="wsu:WS0840"/>
<dbReference type="eggNOG" id="COG1921">
    <property type="taxonomic scope" value="Bacteria"/>
</dbReference>
<dbReference type="HOGENOM" id="CLU_038142_1_0_7"/>
<dbReference type="UniPathway" id="UPA00906">
    <property type="reaction ID" value="UER00896"/>
</dbReference>
<dbReference type="Proteomes" id="UP000000422">
    <property type="component" value="Chromosome"/>
</dbReference>
<dbReference type="GO" id="GO:0005737">
    <property type="term" value="C:cytoplasm"/>
    <property type="evidence" value="ECO:0007669"/>
    <property type="project" value="UniProtKB-SubCell"/>
</dbReference>
<dbReference type="GO" id="GO:0004125">
    <property type="term" value="F:L-seryl-tRNA(Sec) selenium transferase activity"/>
    <property type="evidence" value="ECO:0007669"/>
    <property type="project" value="UniProtKB-UniRule"/>
</dbReference>
<dbReference type="GO" id="GO:0001717">
    <property type="term" value="P:conversion of seryl-tRNAsec to selenocys-tRNAsec"/>
    <property type="evidence" value="ECO:0007669"/>
    <property type="project" value="UniProtKB-UniRule"/>
</dbReference>
<dbReference type="GO" id="GO:0001514">
    <property type="term" value="P:selenocysteine incorporation"/>
    <property type="evidence" value="ECO:0007669"/>
    <property type="project" value="UniProtKB-UniRule"/>
</dbReference>
<dbReference type="Gene3D" id="3.90.1150.180">
    <property type="match status" value="1"/>
</dbReference>
<dbReference type="Gene3D" id="3.40.640.10">
    <property type="entry name" value="Type I PLP-dependent aspartate aminotransferase-like (Major domain)"/>
    <property type="match status" value="1"/>
</dbReference>
<dbReference type="HAMAP" id="MF_00423">
    <property type="entry name" value="SelA"/>
    <property type="match status" value="1"/>
</dbReference>
<dbReference type="InterPro" id="IPR015424">
    <property type="entry name" value="PyrdxlP-dep_Trfase"/>
</dbReference>
<dbReference type="InterPro" id="IPR015421">
    <property type="entry name" value="PyrdxlP-dep_Trfase_major"/>
</dbReference>
<dbReference type="InterPro" id="IPR018319">
    <property type="entry name" value="SelA-like"/>
</dbReference>
<dbReference type="InterPro" id="IPR004534">
    <property type="entry name" value="SelA_trans"/>
</dbReference>
<dbReference type="NCBIfam" id="TIGR00474">
    <property type="entry name" value="selA"/>
    <property type="match status" value="1"/>
</dbReference>
<dbReference type="PANTHER" id="PTHR32328">
    <property type="entry name" value="L-SERYL-TRNA(SEC) SELENIUM TRANSFERASE"/>
    <property type="match status" value="1"/>
</dbReference>
<dbReference type="PANTHER" id="PTHR32328:SF0">
    <property type="entry name" value="L-SERYL-TRNA(SEC) SELENIUM TRANSFERASE"/>
    <property type="match status" value="1"/>
</dbReference>
<dbReference type="Pfam" id="PF03841">
    <property type="entry name" value="SelA"/>
    <property type="match status" value="1"/>
</dbReference>
<dbReference type="SUPFAM" id="SSF53383">
    <property type="entry name" value="PLP-dependent transferases"/>
    <property type="match status" value="1"/>
</dbReference>
<comment type="function">
    <text evidence="1">Converts seryl-tRNA(Sec) to selenocysteinyl-tRNA(Sec) required for selenoprotein biosynthesis.</text>
</comment>
<comment type="catalytic activity">
    <reaction evidence="1">
        <text>L-seryl-tRNA(Sec) + selenophosphate + H(+) = L-selenocysteinyl-tRNA(Sec) + phosphate</text>
        <dbReference type="Rhea" id="RHEA:22728"/>
        <dbReference type="Rhea" id="RHEA-COMP:9742"/>
        <dbReference type="Rhea" id="RHEA-COMP:9743"/>
        <dbReference type="ChEBI" id="CHEBI:15378"/>
        <dbReference type="ChEBI" id="CHEBI:16144"/>
        <dbReference type="ChEBI" id="CHEBI:43474"/>
        <dbReference type="ChEBI" id="CHEBI:78533"/>
        <dbReference type="ChEBI" id="CHEBI:78573"/>
        <dbReference type="EC" id="2.9.1.1"/>
    </reaction>
</comment>
<comment type="cofactor">
    <cofactor evidence="1">
        <name>pyridoxal 5'-phosphate</name>
        <dbReference type="ChEBI" id="CHEBI:597326"/>
    </cofactor>
</comment>
<comment type="pathway">
    <text evidence="1">Aminoacyl-tRNA biosynthesis; selenocysteinyl-tRNA(Sec) biosynthesis; selenocysteinyl-tRNA(Sec) from L-seryl-tRNA(Sec) (bacterial route): step 1/1.</text>
</comment>
<comment type="subcellular location">
    <subcellularLocation>
        <location evidence="1">Cytoplasm</location>
    </subcellularLocation>
</comment>
<comment type="similarity">
    <text evidence="1">Belongs to the SelA family.</text>
</comment>
<accession>Q7M9L1</accession>
<sequence>MSHPLRSLPKIDKILQESRFADHSKELLTTLARDYLEEIRAQFLQDATPIPPSESILQEVERRYEASLAPSLVPLVNATGIIVHTNLGRSVFAPELIEEIKPLLTSYNNLEYDLKAGRRGERYSHLHGILKAILGCEEVLVVNNNAAAVFLILHTFAQNQEAIISRGELIEIGGSFRIPEVMKNAGAILKEVGTTNKTHRRDYEEAITPQSALLMKVHKSNYDIVGFTQEVDLQELIELSQKHNLIDYYDLGSGFLESVPFTNEPTLKKIASLSPSLVSFSGDKLLGGAQAGIIFGKKSLIDRLKKNQLLRMLRVDKFTLAALEATLRAHLLHDYEKIPTLKMAHLSLEELEERAKKLKSRVHGYESQILQTQGYAGGGALPNQSFFSIALALCHPQKSPMELEQSLRARGVIARIEQERVLLDMRTIFTSQLESLAQILNEVF</sequence>
<proteinExistence type="inferred from homology"/>
<feature type="chain" id="PRO_0000189620" description="L-seryl-tRNA(Sec) selenium transferase">
    <location>
        <begin position="1"/>
        <end position="444"/>
    </location>
</feature>
<feature type="modified residue" description="N6-(pyridoxal phosphate)lysine" evidence="1">
    <location>
        <position position="284"/>
    </location>
</feature>
<evidence type="ECO:0000255" key="1">
    <source>
        <dbReference type="HAMAP-Rule" id="MF_00423"/>
    </source>
</evidence>
<gene>
    <name evidence="1" type="primary">selA</name>
    <name type="ordered locus">WS0840</name>
</gene>
<keyword id="KW-0963">Cytoplasm</keyword>
<keyword id="KW-0648">Protein biosynthesis</keyword>
<keyword id="KW-0663">Pyridoxal phosphate</keyword>
<keyword id="KW-1185">Reference proteome</keyword>
<keyword id="KW-0711">Selenium</keyword>
<keyword id="KW-0808">Transferase</keyword>